<accession>Q0JI49</accession>
<accession>Q5JN72</accession>
<feature type="chain" id="PRO_0000338369" description="CBL-interacting protein kinase 11">
    <location>
        <begin position="1"/>
        <end position="502"/>
    </location>
</feature>
<feature type="domain" description="Protein kinase" evidence="2">
    <location>
        <begin position="12"/>
        <end position="267"/>
    </location>
</feature>
<feature type="domain" description="NAF" evidence="3">
    <location>
        <begin position="297"/>
        <end position="333"/>
    </location>
</feature>
<feature type="region of interest" description="Activation loop" evidence="1">
    <location>
        <begin position="153"/>
        <end position="182"/>
    </location>
</feature>
<feature type="region of interest" description="PPI" evidence="1">
    <location>
        <begin position="339"/>
        <end position="367"/>
    </location>
</feature>
<feature type="region of interest" description="Disordered" evidence="5">
    <location>
        <begin position="447"/>
        <end position="502"/>
    </location>
</feature>
<feature type="compositionally biased region" description="Low complexity" evidence="5">
    <location>
        <begin position="461"/>
        <end position="472"/>
    </location>
</feature>
<feature type="compositionally biased region" description="Polar residues" evidence="5">
    <location>
        <begin position="493"/>
        <end position="502"/>
    </location>
</feature>
<feature type="active site" description="Proton acceptor" evidence="2 4">
    <location>
        <position position="135"/>
    </location>
</feature>
<feature type="binding site" evidence="2">
    <location>
        <begin position="18"/>
        <end position="26"/>
    </location>
    <ligand>
        <name>ATP</name>
        <dbReference type="ChEBI" id="CHEBI:30616"/>
    </ligand>
</feature>
<feature type="binding site" evidence="2">
    <location>
        <position position="41"/>
    </location>
    <ligand>
        <name>ATP</name>
        <dbReference type="ChEBI" id="CHEBI:30616"/>
    </ligand>
</feature>
<feature type="sequence conflict" description="In Ref. 5; AK103032." evidence="7" ref="5">
    <original>M</original>
    <variation>I</variation>
    <location>
        <position position="79"/>
    </location>
</feature>
<dbReference type="EC" id="2.7.11.1"/>
<dbReference type="EMBL" id="AP003230">
    <property type="protein sequence ID" value="BAD87085.1"/>
    <property type="status" value="ALT_INIT"/>
    <property type="molecule type" value="Genomic_DNA"/>
</dbReference>
<dbReference type="EMBL" id="AP008207">
    <property type="protein sequence ID" value="BAF06579.2"/>
    <property type="status" value="ALT_INIT"/>
    <property type="molecule type" value="Genomic_DNA"/>
</dbReference>
<dbReference type="EMBL" id="AP014957">
    <property type="protein sequence ID" value="BAS75001.1"/>
    <property type="molecule type" value="Genomic_DNA"/>
</dbReference>
<dbReference type="EMBL" id="AK103032">
    <property type="status" value="NOT_ANNOTATED_CDS"/>
    <property type="molecule type" value="mRNA"/>
</dbReference>
<dbReference type="RefSeq" id="XP_015621627.1">
    <property type="nucleotide sequence ID" value="XM_015766141.1"/>
</dbReference>
<dbReference type="RefSeq" id="XP_015621628.1">
    <property type="nucleotide sequence ID" value="XM_015766142.1"/>
</dbReference>
<dbReference type="RefSeq" id="XP_015621629.1">
    <property type="nucleotide sequence ID" value="XM_015766143.1"/>
</dbReference>
<dbReference type="RefSeq" id="XP_015621630.1">
    <property type="nucleotide sequence ID" value="XM_015766144.1"/>
</dbReference>
<dbReference type="SMR" id="Q0JI49"/>
<dbReference type="FunCoup" id="Q0JI49">
    <property type="interactions" value="450"/>
</dbReference>
<dbReference type="STRING" id="39947.Q0JI49"/>
<dbReference type="PaxDb" id="39947-Q0JI49"/>
<dbReference type="EnsemblPlants" id="Os01t0824600-01">
    <property type="protein sequence ID" value="Os01t0824600-01"/>
    <property type="gene ID" value="Os01g0824600"/>
</dbReference>
<dbReference type="GeneID" id="107275263"/>
<dbReference type="Gramene" id="Os01t0824600-01">
    <property type="protein sequence ID" value="Os01t0824600-01"/>
    <property type="gene ID" value="Os01g0824600"/>
</dbReference>
<dbReference type="KEGG" id="dosa:Os01g0824600"/>
<dbReference type="KEGG" id="osa:107275263"/>
<dbReference type="eggNOG" id="KOG0583">
    <property type="taxonomic scope" value="Eukaryota"/>
</dbReference>
<dbReference type="HOGENOM" id="CLU_000288_59_8_1"/>
<dbReference type="InParanoid" id="Q0JI49"/>
<dbReference type="OMA" id="DFRCPRG"/>
<dbReference type="OrthoDB" id="650722at2759"/>
<dbReference type="Proteomes" id="UP000000763">
    <property type="component" value="Chromosome 1"/>
</dbReference>
<dbReference type="Proteomes" id="UP000059680">
    <property type="component" value="Chromosome 1"/>
</dbReference>
<dbReference type="ExpressionAtlas" id="Q0JI49">
    <property type="expression patterns" value="baseline and differential"/>
</dbReference>
<dbReference type="GO" id="GO:0005524">
    <property type="term" value="F:ATP binding"/>
    <property type="evidence" value="ECO:0007669"/>
    <property type="project" value="UniProtKB-KW"/>
</dbReference>
<dbReference type="GO" id="GO:0106310">
    <property type="term" value="F:protein serine kinase activity"/>
    <property type="evidence" value="ECO:0007669"/>
    <property type="project" value="RHEA"/>
</dbReference>
<dbReference type="GO" id="GO:0004674">
    <property type="term" value="F:protein serine/threonine kinase activity"/>
    <property type="evidence" value="ECO:0000318"/>
    <property type="project" value="GO_Central"/>
</dbReference>
<dbReference type="GO" id="GO:0007165">
    <property type="term" value="P:signal transduction"/>
    <property type="evidence" value="ECO:0000318"/>
    <property type="project" value="GO_Central"/>
</dbReference>
<dbReference type="CDD" id="cd12195">
    <property type="entry name" value="CIPK_C"/>
    <property type="match status" value="1"/>
</dbReference>
<dbReference type="CDD" id="cd14663">
    <property type="entry name" value="STKc_SnRK3"/>
    <property type="match status" value="1"/>
</dbReference>
<dbReference type="FunFam" id="1.10.510.10:FF:000279">
    <property type="entry name" value="Non-specific serine/threonine protein kinase"/>
    <property type="match status" value="1"/>
</dbReference>
<dbReference type="FunFam" id="3.30.200.20:FF:000096">
    <property type="entry name" value="Non-specific serine/threonine protein kinase"/>
    <property type="match status" value="1"/>
</dbReference>
<dbReference type="FunFam" id="3.30.310.80:FF:000005">
    <property type="entry name" value="Non-specific serine/threonine protein kinase"/>
    <property type="match status" value="1"/>
</dbReference>
<dbReference type="Gene3D" id="3.30.310.80">
    <property type="entry name" value="Kinase associated domain 1, KA1"/>
    <property type="match status" value="1"/>
</dbReference>
<dbReference type="Gene3D" id="3.30.200.20">
    <property type="entry name" value="Phosphorylase Kinase, domain 1"/>
    <property type="match status" value="1"/>
</dbReference>
<dbReference type="Gene3D" id="1.10.510.10">
    <property type="entry name" value="Transferase(Phosphotransferase) domain 1"/>
    <property type="match status" value="1"/>
</dbReference>
<dbReference type="InterPro" id="IPR011009">
    <property type="entry name" value="Kinase-like_dom_sf"/>
</dbReference>
<dbReference type="InterPro" id="IPR018451">
    <property type="entry name" value="NAF/FISL_domain"/>
</dbReference>
<dbReference type="InterPro" id="IPR004041">
    <property type="entry name" value="NAF_dom"/>
</dbReference>
<dbReference type="InterPro" id="IPR000719">
    <property type="entry name" value="Prot_kinase_dom"/>
</dbReference>
<dbReference type="InterPro" id="IPR017441">
    <property type="entry name" value="Protein_kinase_ATP_BS"/>
</dbReference>
<dbReference type="InterPro" id="IPR008271">
    <property type="entry name" value="Ser/Thr_kinase_AS"/>
</dbReference>
<dbReference type="PANTHER" id="PTHR43895">
    <property type="entry name" value="CALCIUM/CALMODULIN-DEPENDENT PROTEIN KINASE KINASE-RELATED"/>
    <property type="match status" value="1"/>
</dbReference>
<dbReference type="PANTHER" id="PTHR43895:SF30">
    <property type="entry name" value="CBL-INTERACTING PROTEIN KINASE 11"/>
    <property type="match status" value="1"/>
</dbReference>
<dbReference type="Pfam" id="PF03822">
    <property type="entry name" value="NAF"/>
    <property type="match status" value="1"/>
</dbReference>
<dbReference type="Pfam" id="PF00069">
    <property type="entry name" value="Pkinase"/>
    <property type="match status" value="1"/>
</dbReference>
<dbReference type="SMART" id="SM00220">
    <property type="entry name" value="S_TKc"/>
    <property type="match status" value="1"/>
</dbReference>
<dbReference type="SUPFAM" id="SSF56112">
    <property type="entry name" value="Protein kinase-like (PK-like)"/>
    <property type="match status" value="1"/>
</dbReference>
<dbReference type="PROSITE" id="PS50816">
    <property type="entry name" value="NAF"/>
    <property type="match status" value="1"/>
</dbReference>
<dbReference type="PROSITE" id="PS00107">
    <property type="entry name" value="PROTEIN_KINASE_ATP"/>
    <property type="match status" value="1"/>
</dbReference>
<dbReference type="PROSITE" id="PS50011">
    <property type="entry name" value="PROTEIN_KINASE_DOM"/>
    <property type="match status" value="1"/>
</dbReference>
<dbReference type="PROSITE" id="PS00108">
    <property type="entry name" value="PROTEIN_KINASE_ST"/>
    <property type="match status" value="1"/>
</dbReference>
<comment type="function">
    <text evidence="1">CIPK serine-threonine protein kinases interact with CBL proteins. Binding of a CBL protein to the regulatory NAF domain of CIPK protein lead to the activation of the kinase in a calcium-dependent manner (By similarity).</text>
</comment>
<comment type="catalytic activity">
    <reaction>
        <text>L-seryl-[protein] + ATP = O-phospho-L-seryl-[protein] + ADP + H(+)</text>
        <dbReference type="Rhea" id="RHEA:17989"/>
        <dbReference type="Rhea" id="RHEA-COMP:9863"/>
        <dbReference type="Rhea" id="RHEA-COMP:11604"/>
        <dbReference type="ChEBI" id="CHEBI:15378"/>
        <dbReference type="ChEBI" id="CHEBI:29999"/>
        <dbReference type="ChEBI" id="CHEBI:30616"/>
        <dbReference type="ChEBI" id="CHEBI:83421"/>
        <dbReference type="ChEBI" id="CHEBI:456216"/>
        <dbReference type="EC" id="2.7.11.1"/>
    </reaction>
</comment>
<comment type="catalytic activity">
    <reaction>
        <text>L-threonyl-[protein] + ATP = O-phospho-L-threonyl-[protein] + ADP + H(+)</text>
        <dbReference type="Rhea" id="RHEA:46608"/>
        <dbReference type="Rhea" id="RHEA-COMP:11060"/>
        <dbReference type="Rhea" id="RHEA-COMP:11605"/>
        <dbReference type="ChEBI" id="CHEBI:15378"/>
        <dbReference type="ChEBI" id="CHEBI:30013"/>
        <dbReference type="ChEBI" id="CHEBI:30616"/>
        <dbReference type="ChEBI" id="CHEBI:61977"/>
        <dbReference type="ChEBI" id="CHEBI:456216"/>
        <dbReference type="EC" id="2.7.11.1"/>
    </reaction>
</comment>
<comment type="cofactor">
    <cofactor evidence="1">
        <name>Mn(2+)</name>
        <dbReference type="ChEBI" id="CHEBI:29035"/>
    </cofactor>
</comment>
<comment type="induction">
    <text evidence="6">By drought and salt stresses and abscisic acid (ABA).</text>
</comment>
<comment type="domain">
    <text evidence="1">The activation loop within the kinase domain is the target of phosphorylation/activation by upstream protein kinases. The PPI motif mediates the interaction with the ABI (abscisic acid-insensitive) phosphatases (By similarity).</text>
</comment>
<comment type="similarity">
    <text evidence="7">Belongs to the protein kinase superfamily. CAMK Ser/Thr protein kinase family. SNF1 subfamily.</text>
</comment>
<comment type="sequence caution" evidence="7">
    <conflict type="erroneous initiation">
        <sequence resource="EMBL-CDS" id="BAD87085"/>
    </conflict>
    <text>Truncated N-terminus.</text>
</comment>
<comment type="sequence caution" evidence="7">
    <conflict type="erroneous initiation">
        <sequence resource="EMBL-CDS" id="BAF06579"/>
    </conflict>
    <text>Truncated N-terminus.</text>
</comment>
<reference key="1">
    <citation type="journal article" date="2002" name="Nature">
        <title>The genome sequence and structure of rice chromosome 1.</title>
        <authorList>
            <person name="Sasaki T."/>
            <person name="Matsumoto T."/>
            <person name="Yamamoto K."/>
            <person name="Sakata K."/>
            <person name="Baba T."/>
            <person name="Katayose Y."/>
            <person name="Wu J."/>
            <person name="Niimura Y."/>
            <person name="Cheng Z."/>
            <person name="Nagamura Y."/>
            <person name="Antonio B.A."/>
            <person name="Kanamori H."/>
            <person name="Hosokawa S."/>
            <person name="Masukawa M."/>
            <person name="Arikawa K."/>
            <person name="Chiden Y."/>
            <person name="Hayashi M."/>
            <person name="Okamoto M."/>
            <person name="Ando T."/>
            <person name="Aoki H."/>
            <person name="Arita K."/>
            <person name="Hamada M."/>
            <person name="Harada C."/>
            <person name="Hijishita S."/>
            <person name="Honda M."/>
            <person name="Ichikawa Y."/>
            <person name="Idonuma A."/>
            <person name="Iijima M."/>
            <person name="Ikeda M."/>
            <person name="Ikeno M."/>
            <person name="Ito S."/>
            <person name="Ito T."/>
            <person name="Ito Y."/>
            <person name="Ito Y."/>
            <person name="Iwabuchi A."/>
            <person name="Kamiya K."/>
            <person name="Karasawa W."/>
            <person name="Katagiri S."/>
            <person name="Kikuta A."/>
            <person name="Kobayashi N."/>
            <person name="Kono I."/>
            <person name="Machita K."/>
            <person name="Maehara T."/>
            <person name="Mizuno H."/>
            <person name="Mizubayashi T."/>
            <person name="Mukai Y."/>
            <person name="Nagasaki H."/>
            <person name="Nakashima M."/>
            <person name="Nakama Y."/>
            <person name="Nakamichi Y."/>
            <person name="Nakamura M."/>
            <person name="Namiki N."/>
            <person name="Negishi M."/>
            <person name="Ohta I."/>
            <person name="Ono N."/>
            <person name="Saji S."/>
            <person name="Sakai K."/>
            <person name="Shibata M."/>
            <person name="Shimokawa T."/>
            <person name="Shomura A."/>
            <person name="Song J."/>
            <person name="Takazaki Y."/>
            <person name="Terasawa K."/>
            <person name="Tsuji K."/>
            <person name="Waki K."/>
            <person name="Yamagata H."/>
            <person name="Yamane H."/>
            <person name="Yoshiki S."/>
            <person name="Yoshihara R."/>
            <person name="Yukawa K."/>
            <person name="Zhong H."/>
            <person name="Iwama H."/>
            <person name="Endo T."/>
            <person name="Ito H."/>
            <person name="Hahn J.H."/>
            <person name="Kim H.-I."/>
            <person name="Eun M.-Y."/>
            <person name="Yano M."/>
            <person name="Jiang J."/>
            <person name="Gojobori T."/>
        </authorList>
    </citation>
    <scope>NUCLEOTIDE SEQUENCE [LARGE SCALE GENOMIC DNA]</scope>
    <source>
        <strain>cv. Nipponbare</strain>
    </source>
</reference>
<reference key="2">
    <citation type="journal article" date="2005" name="Nature">
        <title>The map-based sequence of the rice genome.</title>
        <authorList>
            <consortium name="International rice genome sequencing project (IRGSP)"/>
        </authorList>
    </citation>
    <scope>NUCLEOTIDE SEQUENCE [LARGE SCALE GENOMIC DNA]</scope>
    <source>
        <strain>cv. Nipponbare</strain>
    </source>
</reference>
<reference key="3">
    <citation type="journal article" date="2008" name="Nucleic Acids Res.">
        <title>The rice annotation project database (RAP-DB): 2008 update.</title>
        <authorList>
            <consortium name="The rice annotation project (RAP)"/>
        </authorList>
    </citation>
    <scope>GENOME REANNOTATION</scope>
    <source>
        <strain>cv. Nipponbare</strain>
    </source>
</reference>
<reference key="4">
    <citation type="journal article" date="2013" name="Rice">
        <title>Improvement of the Oryza sativa Nipponbare reference genome using next generation sequence and optical map data.</title>
        <authorList>
            <person name="Kawahara Y."/>
            <person name="de la Bastide M."/>
            <person name="Hamilton J.P."/>
            <person name="Kanamori H."/>
            <person name="McCombie W.R."/>
            <person name="Ouyang S."/>
            <person name="Schwartz D.C."/>
            <person name="Tanaka T."/>
            <person name="Wu J."/>
            <person name="Zhou S."/>
            <person name="Childs K.L."/>
            <person name="Davidson R.M."/>
            <person name="Lin H."/>
            <person name="Quesada-Ocampo L."/>
            <person name="Vaillancourt B."/>
            <person name="Sakai H."/>
            <person name="Lee S.S."/>
            <person name="Kim J."/>
            <person name="Numa H."/>
            <person name="Itoh T."/>
            <person name="Buell C.R."/>
            <person name="Matsumoto T."/>
        </authorList>
    </citation>
    <scope>GENOME REANNOTATION</scope>
    <source>
        <strain>cv. Nipponbare</strain>
    </source>
</reference>
<reference key="5">
    <citation type="journal article" date="2003" name="Science">
        <title>Collection, mapping, and annotation of over 28,000 cDNA clones from japonica rice.</title>
        <authorList>
            <consortium name="The rice full-length cDNA consortium"/>
        </authorList>
    </citation>
    <scope>NUCLEOTIDE SEQUENCE [LARGE SCALE MRNA]</scope>
    <source>
        <strain>cv. Nipponbare</strain>
    </source>
</reference>
<reference key="6">
    <citation type="journal article" date="2004" name="Plant Physiol.">
        <title>Calcium sensors and their interacting protein kinases: genomics of the Arabidopsis and rice CBL-CIPK signaling networks.</title>
        <authorList>
            <person name="Kolukisaoglu U."/>
            <person name="Weinl S."/>
            <person name="Blazevic D."/>
            <person name="Batistic O."/>
            <person name="Kudla J."/>
        </authorList>
    </citation>
    <scope>GENE FAMILY</scope>
    <scope>NOMENCLATURE</scope>
</reference>
<reference key="7">
    <citation type="journal article" date="2007" name="Plant Physiol.">
        <title>Characterization of stress-responsive CIPK genes in rice for stress tolerance improvement.</title>
        <authorList>
            <person name="Xiang Y."/>
            <person name="Huang Y."/>
            <person name="Xiong L."/>
        </authorList>
    </citation>
    <scope>INDUCTION</scope>
</reference>
<evidence type="ECO:0000250" key="1"/>
<evidence type="ECO:0000255" key="2">
    <source>
        <dbReference type="PROSITE-ProRule" id="PRU00159"/>
    </source>
</evidence>
<evidence type="ECO:0000255" key="3">
    <source>
        <dbReference type="PROSITE-ProRule" id="PRU00256"/>
    </source>
</evidence>
<evidence type="ECO:0000255" key="4">
    <source>
        <dbReference type="PROSITE-ProRule" id="PRU10027"/>
    </source>
</evidence>
<evidence type="ECO:0000256" key="5">
    <source>
        <dbReference type="SAM" id="MobiDB-lite"/>
    </source>
</evidence>
<evidence type="ECO:0000269" key="6">
    <source>
    </source>
</evidence>
<evidence type="ECO:0000305" key="7"/>
<sequence>MMDGRSILMGRYEVGKQLGQGTFAKVYYARNLTTGQAVAIKMINKDKVMKVGLMEQIKREISIMRLVKHPNVLQLFEVMASKSKIYFVLEYAKGGELFNKIAKEGKLSEDSARRYFHQLINAVDYCHSRGVYHRDLKPENLLLDENENLKVSDFGLSALAESKRQDGLLHTTCGTPAYVAPEVLSRKGYDGAKADVWSCGVILFVLVAGYLPFHDPNLIEMYRKICRADFRCPRYFSAELKDLIHKILDSDPSTRISIPRIKRSTWYRKPVEINAKNSEAATTNSISSGVATTSGSAECSTSEENQGSLSLPNLNAFDIISLSTGFNLSGFFEDTHGHQEERFTTRQPVTTVLGKLKELAKRLKLKVKKKDNGVLRLAAPKEGKKGFLELDAEIFEVTPSFLLVELKKTNGDTMEYRKLVKEDIRPALKDIVWVWQGDEHLNSQSILQGEQQQSPLPPELPQDQLQPSLPQQEKQDMPEPPLLPQVPQEEVQTSIPAEQTKN</sequence>
<proteinExistence type="evidence at transcript level"/>
<gene>
    <name type="primary">CIPK11</name>
    <name type="ordered locus">Os01g0824600</name>
    <name type="ordered locus">LOC_Os01g60910</name>
    <name type="ORF">P0031D02.33-1</name>
</gene>
<organism>
    <name type="scientific">Oryza sativa subsp. japonica</name>
    <name type="common">Rice</name>
    <dbReference type="NCBI Taxonomy" id="39947"/>
    <lineage>
        <taxon>Eukaryota</taxon>
        <taxon>Viridiplantae</taxon>
        <taxon>Streptophyta</taxon>
        <taxon>Embryophyta</taxon>
        <taxon>Tracheophyta</taxon>
        <taxon>Spermatophyta</taxon>
        <taxon>Magnoliopsida</taxon>
        <taxon>Liliopsida</taxon>
        <taxon>Poales</taxon>
        <taxon>Poaceae</taxon>
        <taxon>BOP clade</taxon>
        <taxon>Oryzoideae</taxon>
        <taxon>Oryzeae</taxon>
        <taxon>Oryzinae</taxon>
        <taxon>Oryza</taxon>
        <taxon>Oryza sativa</taxon>
    </lineage>
</organism>
<keyword id="KW-0067">ATP-binding</keyword>
<keyword id="KW-0418">Kinase</keyword>
<keyword id="KW-0464">Manganese</keyword>
<keyword id="KW-0547">Nucleotide-binding</keyword>
<keyword id="KW-1185">Reference proteome</keyword>
<keyword id="KW-0723">Serine/threonine-protein kinase</keyword>
<keyword id="KW-0808">Transferase</keyword>
<protein>
    <recommendedName>
        <fullName>CBL-interacting protein kinase 11</fullName>
        <ecNumber>2.7.11.1</ecNumber>
    </recommendedName>
    <alternativeName>
        <fullName>OsCIPK11</fullName>
    </alternativeName>
</protein>
<name>CIPKB_ORYSJ</name>